<feature type="peptide" id="PRO_0000225611" description="Defensin-like protein">
    <location>
        <begin position="1"/>
        <end position="10" status="greater than"/>
    </location>
</feature>
<feature type="non-terminal residue" evidence="2">
    <location>
        <position position="10"/>
    </location>
</feature>
<name>DEF_PHACN</name>
<protein>
    <recommendedName>
        <fullName>Defensin-like protein</fullName>
    </recommendedName>
    <alternativeName>
        <fullName>Coccinin</fullName>
    </alternativeName>
</protein>
<evidence type="ECO:0000269" key="1">
    <source>
    </source>
</evidence>
<evidence type="ECO:0000303" key="2">
    <source>
    </source>
</evidence>
<evidence type="ECO:0000305" key="3"/>
<organism>
    <name type="scientific">Phaseolus coccineus</name>
    <name type="common">Scarlet runner bean</name>
    <name type="synonym">Phaseolus multiflorus</name>
    <dbReference type="NCBI Taxonomy" id="3886"/>
    <lineage>
        <taxon>Eukaryota</taxon>
        <taxon>Viridiplantae</taxon>
        <taxon>Streptophyta</taxon>
        <taxon>Embryophyta</taxon>
        <taxon>Tracheophyta</taxon>
        <taxon>Spermatophyta</taxon>
        <taxon>Magnoliopsida</taxon>
        <taxon>eudicotyledons</taxon>
        <taxon>Gunneridae</taxon>
        <taxon>Pentapetalae</taxon>
        <taxon>rosids</taxon>
        <taxon>fabids</taxon>
        <taxon>Fabales</taxon>
        <taxon>Fabaceae</taxon>
        <taxon>Papilionoideae</taxon>
        <taxon>50 kb inversion clade</taxon>
        <taxon>NPAAA clade</taxon>
        <taxon>indigoferoid/millettioid clade</taxon>
        <taxon>Phaseoleae</taxon>
        <taxon>Phaseolus</taxon>
    </lineage>
</organism>
<comment type="function">
    <text evidence="1">Has strong antifungal activity against F.oxysporum, M.arachidicola and P.piricola, and weaker antifungal activity against B.cinerea, C.comatus and R.solani. Exerts antifungal activity against M.arachidicola with an IC(50) of 75 uM. Inhibits the proliferation of leukemia cells in vitro. Inhibits human immunodeficiency virus-1 (HIV-1) reverse transcriptase. Lacks mitogenic activity towards murine splenocytes.</text>
</comment>
<comment type="similarity">
    <text evidence="3">Belongs to the DEFL family.</text>
</comment>
<keyword id="KW-0929">Antimicrobial</keyword>
<keyword id="KW-0903">Direct protein sequencing</keyword>
<keyword id="KW-0295">Fungicide</keyword>
<keyword id="KW-0611">Plant defense</keyword>
<accession>P84785</accession>
<dbReference type="GO" id="GO:0050832">
    <property type="term" value="P:defense response to fungus"/>
    <property type="evidence" value="ECO:0000314"/>
    <property type="project" value="UniProtKB"/>
</dbReference>
<dbReference type="GO" id="GO:0031640">
    <property type="term" value="P:killing of cells of another organism"/>
    <property type="evidence" value="ECO:0007669"/>
    <property type="project" value="UniProtKB-KW"/>
</dbReference>
<dbReference type="GO" id="GO:0008285">
    <property type="term" value="P:negative regulation of cell population proliferation"/>
    <property type="evidence" value="ECO:0000314"/>
    <property type="project" value="UniProtKB"/>
</dbReference>
<proteinExistence type="evidence at protein level"/>
<sequence>KQTENLADTY</sequence>
<reference evidence="3" key="1">
    <citation type="journal article" date="2004" name="Peptides">
        <title>Coccinin, an antifungal peptide with antiproliferative and HIV-1 reverse transcriptase inhibitory activities from large scarlet runner beans.</title>
        <authorList>
            <person name="Ngai P.H."/>
            <person name="Ng T.B."/>
        </authorList>
    </citation>
    <scope>PROTEIN SEQUENCE</scope>
    <scope>FUNCTION</scope>
    <source>
        <strain evidence="1">cv. Major</strain>
        <tissue evidence="1">Seed</tissue>
    </source>
</reference>